<feature type="chain" id="PRO_1000137054" description="Amino-acid acetyltransferase">
    <location>
        <begin position="1"/>
        <end position="446"/>
    </location>
</feature>
<feature type="domain" description="N-acetyltransferase" evidence="1">
    <location>
        <begin position="299"/>
        <end position="431"/>
    </location>
</feature>
<sequence length="446" mass="49518">MKFRSTALVKGFRQSAPYVNAHRDKTVVIMLGGEAIADPNFANIVNDIALLNSLGLRIVIVYGTRPQMRSLLKQTEHHAPFHKGIRITDEQTLELVKQIAGQLQLDITARLSMSLNNTPMAGAQINVISGNFVIAQPLGVDDGIDYCHSGRVRRIDTQGINRMLDQQSIVLLGPVASSVTGECFNLLSEDVATQLAIRLNADKLIGFCSEQGVLNEKGQILAELFPSEAEEILQRLEKELTPENGKLTGTMRFLKGAISACKAGVPRSHLISYKEDGALIQELFSFDGIGTQVVMASSEQVRDAEIDDIGGILDLIRPLEEEGILVRRSREQLEQEIAQFTIIEKDGLVIACAALYPFPEEGMAEMGCVAVHPDYRDGDRGVILLNRLRAKAKQYKLSQLFVLTTRSLHWFREQGFIEVDVSHLPMKKQKLYNFQRKSKILVLKGL</sequence>
<organism>
    <name type="scientific">Aliivibrio fischeri (strain MJ11)</name>
    <name type="common">Vibrio fischeri</name>
    <dbReference type="NCBI Taxonomy" id="388396"/>
    <lineage>
        <taxon>Bacteria</taxon>
        <taxon>Pseudomonadati</taxon>
        <taxon>Pseudomonadota</taxon>
        <taxon>Gammaproteobacteria</taxon>
        <taxon>Vibrionales</taxon>
        <taxon>Vibrionaceae</taxon>
        <taxon>Aliivibrio</taxon>
    </lineage>
</organism>
<accession>B5FAS8</accession>
<proteinExistence type="inferred from homology"/>
<dbReference type="EC" id="2.3.1.1" evidence="1"/>
<dbReference type="EMBL" id="CP001139">
    <property type="protein sequence ID" value="ACH66226.1"/>
    <property type="molecule type" value="Genomic_DNA"/>
</dbReference>
<dbReference type="RefSeq" id="WP_012533582.1">
    <property type="nucleotide sequence ID" value="NC_011184.1"/>
</dbReference>
<dbReference type="SMR" id="B5FAS8"/>
<dbReference type="KEGG" id="vfm:VFMJ11_0599"/>
<dbReference type="HOGENOM" id="CLU_024773_0_0_6"/>
<dbReference type="UniPathway" id="UPA00068">
    <property type="reaction ID" value="UER00106"/>
</dbReference>
<dbReference type="Proteomes" id="UP000001857">
    <property type="component" value="Chromosome I"/>
</dbReference>
<dbReference type="GO" id="GO:0005737">
    <property type="term" value="C:cytoplasm"/>
    <property type="evidence" value="ECO:0007669"/>
    <property type="project" value="UniProtKB-SubCell"/>
</dbReference>
<dbReference type="GO" id="GO:0004042">
    <property type="term" value="F:L-glutamate N-acetyltransferase activity"/>
    <property type="evidence" value="ECO:0007669"/>
    <property type="project" value="UniProtKB-UniRule"/>
</dbReference>
<dbReference type="GO" id="GO:0006526">
    <property type="term" value="P:L-arginine biosynthetic process"/>
    <property type="evidence" value="ECO:0007669"/>
    <property type="project" value="UniProtKB-UniRule"/>
</dbReference>
<dbReference type="CDD" id="cd04237">
    <property type="entry name" value="AAK_NAGS-ABP"/>
    <property type="match status" value="1"/>
</dbReference>
<dbReference type="CDD" id="cd04301">
    <property type="entry name" value="NAT_SF"/>
    <property type="match status" value="1"/>
</dbReference>
<dbReference type="FunFam" id="3.40.1160.10:FF:000005">
    <property type="entry name" value="Amino-acid acetyltransferase"/>
    <property type="match status" value="1"/>
</dbReference>
<dbReference type="Gene3D" id="3.40.630.30">
    <property type="match status" value="1"/>
</dbReference>
<dbReference type="Gene3D" id="3.40.1160.10">
    <property type="entry name" value="Acetylglutamate kinase-like"/>
    <property type="match status" value="1"/>
</dbReference>
<dbReference type="HAMAP" id="MF_01105">
    <property type="entry name" value="N_acetyl_glu_synth"/>
    <property type="match status" value="1"/>
</dbReference>
<dbReference type="InterPro" id="IPR036393">
    <property type="entry name" value="AceGlu_kinase-like_sf"/>
</dbReference>
<dbReference type="InterPro" id="IPR016181">
    <property type="entry name" value="Acyl_CoA_acyltransferase"/>
</dbReference>
<dbReference type="InterPro" id="IPR001048">
    <property type="entry name" value="Asp/Glu/Uridylate_kinase"/>
</dbReference>
<dbReference type="InterPro" id="IPR000182">
    <property type="entry name" value="GNAT_dom"/>
</dbReference>
<dbReference type="InterPro" id="IPR033719">
    <property type="entry name" value="NAGS_kin"/>
</dbReference>
<dbReference type="InterPro" id="IPR010167">
    <property type="entry name" value="NH2A_AcTrfase"/>
</dbReference>
<dbReference type="NCBIfam" id="TIGR01890">
    <property type="entry name" value="N-Ac-Glu-synth"/>
    <property type="match status" value="1"/>
</dbReference>
<dbReference type="NCBIfam" id="NF003641">
    <property type="entry name" value="PRK05279.1"/>
    <property type="match status" value="1"/>
</dbReference>
<dbReference type="PANTHER" id="PTHR30602">
    <property type="entry name" value="AMINO-ACID ACETYLTRANSFERASE"/>
    <property type="match status" value="1"/>
</dbReference>
<dbReference type="PANTHER" id="PTHR30602:SF12">
    <property type="entry name" value="AMINO-ACID ACETYLTRANSFERASE NAGS1, CHLOROPLASTIC-RELATED"/>
    <property type="match status" value="1"/>
</dbReference>
<dbReference type="Pfam" id="PF00696">
    <property type="entry name" value="AA_kinase"/>
    <property type="match status" value="1"/>
</dbReference>
<dbReference type="Pfam" id="PF00583">
    <property type="entry name" value="Acetyltransf_1"/>
    <property type="match status" value="1"/>
</dbReference>
<dbReference type="PIRSF" id="PIRSF000423">
    <property type="entry name" value="ArgA"/>
    <property type="match status" value="1"/>
</dbReference>
<dbReference type="SUPFAM" id="SSF55729">
    <property type="entry name" value="Acyl-CoA N-acyltransferases (Nat)"/>
    <property type="match status" value="1"/>
</dbReference>
<dbReference type="SUPFAM" id="SSF53633">
    <property type="entry name" value="Carbamate kinase-like"/>
    <property type="match status" value="1"/>
</dbReference>
<dbReference type="PROSITE" id="PS51186">
    <property type="entry name" value="GNAT"/>
    <property type="match status" value="1"/>
</dbReference>
<evidence type="ECO:0000255" key="1">
    <source>
        <dbReference type="HAMAP-Rule" id="MF_01105"/>
    </source>
</evidence>
<comment type="catalytic activity">
    <reaction evidence="1">
        <text>L-glutamate + acetyl-CoA = N-acetyl-L-glutamate + CoA + H(+)</text>
        <dbReference type="Rhea" id="RHEA:24292"/>
        <dbReference type="ChEBI" id="CHEBI:15378"/>
        <dbReference type="ChEBI" id="CHEBI:29985"/>
        <dbReference type="ChEBI" id="CHEBI:44337"/>
        <dbReference type="ChEBI" id="CHEBI:57287"/>
        <dbReference type="ChEBI" id="CHEBI:57288"/>
        <dbReference type="EC" id="2.3.1.1"/>
    </reaction>
</comment>
<comment type="pathway">
    <text evidence="1">Amino-acid biosynthesis; L-arginine biosynthesis; N(2)-acetyl-L-ornithine from L-glutamate: step 1/4.</text>
</comment>
<comment type="subcellular location">
    <subcellularLocation>
        <location evidence="1">Cytoplasm</location>
    </subcellularLocation>
</comment>
<comment type="similarity">
    <text evidence="1">Belongs to the acetyltransferase family. ArgA subfamily.</text>
</comment>
<name>ARGA_ALIFM</name>
<gene>
    <name evidence="1" type="primary">argA</name>
    <name type="ordered locus">VFMJ11_0599</name>
</gene>
<reference key="1">
    <citation type="submission" date="2008-08" db="EMBL/GenBank/DDBJ databases">
        <title>Complete sequence of Vibrio fischeri strain MJ11.</title>
        <authorList>
            <person name="Mandel M.J."/>
            <person name="Stabb E.V."/>
            <person name="Ruby E.G."/>
            <person name="Ferriera S."/>
            <person name="Johnson J."/>
            <person name="Kravitz S."/>
            <person name="Beeson K."/>
            <person name="Sutton G."/>
            <person name="Rogers Y.-H."/>
            <person name="Friedman R."/>
            <person name="Frazier M."/>
            <person name="Venter J.C."/>
        </authorList>
    </citation>
    <scope>NUCLEOTIDE SEQUENCE [LARGE SCALE GENOMIC DNA]</scope>
    <source>
        <strain>MJ11</strain>
    </source>
</reference>
<keyword id="KW-0012">Acyltransferase</keyword>
<keyword id="KW-0028">Amino-acid biosynthesis</keyword>
<keyword id="KW-0055">Arginine biosynthesis</keyword>
<keyword id="KW-0963">Cytoplasm</keyword>
<keyword id="KW-0808">Transferase</keyword>
<protein>
    <recommendedName>
        <fullName evidence="1">Amino-acid acetyltransferase</fullName>
        <ecNumber evidence="1">2.3.1.1</ecNumber>
    </recommendedName>
    <alternativeName>
        <fullName evidence="1">N-acetylglutamate synthase</fullName>
        <shortName evidence="1">AGS</shortName>
        <shortName evidence="1">NAGS</shortName>
    </alternativeName>
</protein>